<gene>
    <name evidence="1" type="primary">coaX</name>
    <name type="ordered locus">MUL_4182</name>
</gene>
<feature type="chain" id="PRO_1000054395" description="Type III pantothenate kinase">
    <location>
        <begin position="1"/>
        <end position="272"/>
    </location>
</feature>
<feature type="active site" description="Proton acceptor" evidence="1">
    <location>
        <position position="111"/>
    </location>
</feature>
<feature type="binding site" evidence="1">
    <location>
        <begin position="6"/>
        <end position="13"/>
    </location>
    <ligand>
        <name>ATP</name>
        <dbReference type="ChEBI" id="CHEBI:30616"/>
    </ligand>
</feature>
<feature type="binding site" evidence="1">
    <location>
        <begin position="109"/>
        <end position="112"/>
    </location>
    <ligand>
        <name>substrate</name>
    </ligand>
</feature>
<feature type="binding site" evidence="1">
    <location>
        <position position="131"/>
    </location>
    <ligand>
        <name>K(+)</name>
        <dbReference type="ChEBI" id="CHEBI:29103"/>
    </ligand>
</feature>
<feature type="binding site" evidence="1">
    <location>
        <position position="134"/>
    </location>
    <ligand>
        <name>ATP</name>
        <dbReference type="ChEBI" id="CHEBI:30616"/>
    </ligand>
</feature>
<feature type="binding site" evidence="1">
    <location>
        <position position="186"/>
    </location>
    <ligand>
        <name>substrate</name>
    </ligand>
</feature>
<accession>A0PV48</accession>
<reference key="1">
    <citation type="journal article" date="2007" name="Genome Res.">
        <title>Reductive evolution and niche adaptation inferred from the genome of Mycobacterium ulcerans, the causative agent of Buruli ulcer.</title>
        <authorList>
            <person name="Stinear T.P."/>
            <person name="Seemann T."/>
            <person name="Pidot S."/>
            <person name="Frigui W."/>
            <person name="Reysset G."/>
            <person name="Garnier T."/>
            <person name="Meurice G."/>
            <person name="Simon D."/>
            <person name="Bouchier C."/>
            <person name="Ma L."/>
            <person name="Tichit M."/>
            <person name="Porter J.L."/>
            <person name="Ryan J."/>
            <person name="Johnson P.D.R."/>
            <person name="Davies J.K."/>
            <person name="Jenkin G.A."/>
            <person name="Small P.L.C."/>
            <person name="Jones L.M."/>
            <person name="Tekaia F."/>
            <person name="Laval F."/>
            <person name="Daffe M."/>
            <person name="Parkhill J."/>
            <person name="Cole S.T."/>
        </authorList>
    </citation>
    <scope>NUCLEOTIDE SEQUENCE [LARGE SCALE GENOMIC DNA]</scope>
    <source>
        <strain>Agy99</strain>
    </source>
</reference>
<organism>
    <name type="scientific">Mycobacterium ulcerans (strain Agy99)</name>
    <dbReference type="NCBI Taxonomy" id="362242"/>
    <lineage>
        <taxon>Bacteria</taxon>
        <taxon>Bacillati</taxon>
        <taxon>Actinomycetota</taxon>
        <taxon>Actinomycetes</taxon>
        <taxon>Mycobacteriales</taxon>
        <taxon>Mycobacteriaceae</taxon>
        <taxon>Mycobacterium</taxon>
        <taxon>Mycobacterium ulcerans group</taxon>
    </lineage>
</organism>
<evidence type="ECO:0000255" key="1">
    <source>
        <dbReference type="HAMAP-Rule" id="MF_01274"/>
    </source>
</evidence>
<name>COAX_MYCUA</name>
<dbReference type="EC" id="2.7.1.33" evidence="1"/>
<dbReference type="EMBL" id="CP000325">
    <property type="protein sequence ID" value="ABL06217.1"/>
    <property type="molecule type" value="Genomic_DNA"/>
</dbReference>
<dbReference type="RefSeq" id="WP_011741820.1">
    <property type="nucleotide sequence ID" value="NC_008611.1"/>
</dbReference>
<dbReference type="SMR" id="A0PV48"/>
<dbReference type="KEGG" id="mul:MUL_4182"/>
<dbReference type="eggNOG" id="COG1521">
    <property type="taxonomic scope" value="Bacteria"/>
</dbReference>
<dbReference type="HOGENOM" id="CLU_066627_1_0_11"/>
<dbReference type="UniPathway" id="UPA00241">
    <property type="reaction ID" value="UER00352"/>
</dbReference>
<dbReference type="Proteomes" id="UP000000765">
    <property type="component" value="Chromosome"/>
</dbReference>
<dbReference type="GO" id="GO:0005737">
    <property type="term" value="C:cytoplasm"/>
    <property type="evidence" value="ECO:0007669"/>
    <property type="project" value="UniProtKB-SubCell"/>
</dbReference>
<dbReference type="GO" id="GO:0005524">
    <property type="term" value="F:ATP binding"/>
    <property type="evidence" value="ECO:0007669"/>
    <property type="project" value="UniProtKB-UniRule"/>
</dbReference>
<dbReference type="GO" id="GO:0046872">
    <property type="term" value="F:metal ion binding"/>
    <property type="evidence" value="ECO:0007669"/>
    <property type="project" value="UniProtKB-KW"/>
</dbReference>
<dbReference type="GO" id="GO:0004594">
    <property type="term" value="F:pantothenate kinase activity"/>
    <property type="evidence" value="ECO:0007669"/>
    <property type="project" value="UniProtKB-UniRule"/>
</dbReference>
<dbReference type="GO" id="GO:0015937">
    <property type="term" value="P:coenzyme A biosynthetic process"/>
    <property type="evidence" value="ECO:0007669"/>
    <property type="project" value="UniProtKB-UniRule"/>
</dbReference>
<dbReference type="CDD" id="cd24015">
    <property type="entry name" value="ASKHA_NBD_PanK-III"/>
    <property type="match status" value="1"/>
</dbReference>
<dbReference type="Gene3D" id="3.30.420.40">
    <property type="match status" value="2"/>
</dbReference>
<dbReference type="HAMAP" id="MF_01274">
    <property type="entry name" value="Pantothen_kinase_3"/>
    <property type="match status" value="1"/>
</dbReference>
<dbReference type="InterPro" id="IPR043129">
    <property type="entry name" value="ATPase_NBD"/>
</dbReference>
<dbReference type="InterPro" id="IPR004619">
    <property type="entry name" value="Type_III_PanK"/>
</dbReference>
<dbReference type="NCBIfam" id="TIGR00671">
    <property type="entry name" value="baf"/>
    <property type="match status" value="1"/>
</dbReference>
<dbReference type="NCBIfam" id="NF009845">
    <property type="entry name" value="PRK13318.1-3"/>
    <property type="match status" value="1"/>
</dbReference>
<dbReference type="PANTHER" id="PTHR34265">
    <property type="entry name" value="TYPE III PANTOTHENATE KINASE"/>
    <property type="match status" value="1"/>
</dbReference>
<dbReference type="PANTHER" id="PTHR34265:SF1">
    <property type="entry name" value="TYPE III PANTOTHENATE KINASE"/>
    <property type="match status" value="1"/>
</dbReference>
<dbReference type="Pfam" id="PF03309">
    <property type="entry name" value="Pan_kinase"/>
    <property type="match status" value="1"/>
</dbReference>
<dbReference type="SUPFAM" id="SSF53067">
    <property type="entry name" value="Actin-like ATPase domain"/>
    <property type="match status" value="2"/>
</dbReference>
<proteinExistence type="inferred from homology"/>
<protein>
    <recommendedName>
        <fullName evidence="1">Type III pantothenate kinase</fullName>
        <ecNumber evidence="1">2.7.1.33</ecNumber>
    </recommendedName>
    <alternativeName>
        <fullName evidence="1">PanK-III</fullName>
    </alternativeName>
    <alternativeName>
        <fullName evidence="1">Pantothenic acid kinase</fullName>
    </alternativeName>
</protein>
<sequence length="272" mass="29116">MLLAIDVRNTHTVVGLLSGAKQHAKVVQQWRIRTESEVTADELALTIDGLIGEDSERLTGATGLSTVPSVLHEVRIMLEQYWPSVPHVLIEPGVRTGIPLLVDNPKEVGADRIVNCLAAYQQFAKAAIVVDFGSSICVDVVSAKGEFLGGAIAPGVQVSSDAAAARSAALRRVELARPRSVVGKNTVECMQAGAVFGFAGLVDGLVARIREDVKGFSADDDVAVVATGHTAPLLLPELHSVEHFDEHLTLNGLRLVFERNREAQRGRLKPAR</sequence>
<comment type="function">
    <text evidence="1">Catalyzes the phosphorylation of pantothenate (Pan), the first step in CoA biosynthesis.</text>
</comment>
<comment type="catalytic activity">
    <reaction evidence="1">
        <text>(R)-pantothenate + ATP = (R)-4'-phosphopantothenate + ADP + H(+)</text>
        <dbReference type="Rhea" id="RHEA:16373"/>
        <dbReference type="ChEBI" id="CHEBI:10986"/>
        <dbReference type="ChEBI" id="CHEBI:15378"/>
        <dbReference type="ChEBI" id="CHEBI:29032"/>
        <dbReference type="ChEBI" id="CHEBI:30616"/>
        <dbReference type="ChEBI" id="CHEBI:456216"/>
        <dbReference type="EC" id="2.7.1.33"/>
    </reaction>
</comment>
<comment type="cofactor">
    <cofactor evidence="1">
        <name>NH4(+)</name>
        <dbReference type="ChEBI" id="CHEBI:28938"/>
    </cofactor>
    <cofactor evidence="1">
        <name>K(+)</name>
        <dbReference type="ChEBI" id="CHEBI:29103"/>
    </cofactor>
    <text evidence="1">A monovalent cation. Ammonium or potassium.</text>
</comment>
<comment type="pathway">
    <text evidence="1">Cofactor biosynthesis; coenzyme A biosynthesis; CoA from (R)-pantothenate: step 1/5.</text>
</comment>
<comment type="subunit">
    <text evidence="1">Homodimer.</text>
</comment>
<comment type="subcellular location">
    <subcellularLocation>
        <location evidence="1">Cytoplasm</location>
    </subcellularLocation>
</comment>
<comment type="similarity">
    <text evidence="1">Belongs to the type III pantothenate kinase family.</text>
</comment>
<keyword id="KW-0067">ATP-binding</keyword>
<keyword id="KW-0173">Coenzyme A biosynthesis</keyword>
<keyword id="KW-0963">Cytoplasm</keyword>
<keyword id="KW-0418">Kinase</keyword>
<keyword id="KW-0479">Metal-binding</keyword>
<keyword id="KW-0547">Nucleotide-binding</keyword>
<keyword id="KW-0630">Potassium</keyword>
<keyword id="KW-0808">Transferase</keyword>